<accession>P48085</accession>
<keyword id="KW-0066">ATP synthesis</keyword>
<keyword id="KW-0138">CF(0)</keyword>
<keyword id="KW-0194">Cyanelle</keyword>
<keyword id="KW-0375">Hydrogen ion transport</keyword>
<keyword id="KW-0406">Ion transport</keyword>
<keyword id="KW-0472">Membrane</keyword>
<keyword id="KW-0934">Plastid</keyword>
<keyword id="KW-0793">Thylakoid</keyword>
<keyword id="KW-0812">Transmembrane</keyword>
<keyword id="KW-1133">Transmembrane helix</keyword>
<keyword id="KW-0813">Transport</keyword>
<feature type="chain" id="PRO_0000082431" description="ATP synthase B' chain, cyanelle">
    <location>
        <begin position="1"/>
        <end position="164"/>
    </location>
</feature>
<feature type="transmembrane region" description="Helical" evidence="2">
    <location>
        <begin position="26"/>
        <end position="46"/>
    </location>
</feature>
<organism>
    <name type="scientific">Cyanophora paradoxa</name>
    <dbReference type="NCBI Taxonomy" id="2762"/>
    <lineage>
        <taxon>Eukaryota</taxon>
        <taxon>Glaucocystophyceae</taxon>
        <taxon>Cyanophoraceae</taxon>
        <taxon>Cyanophora</taxon>
    </lineage>
</organism>
<proteinExistence type="inferred from homology"/>
<sequence length="164" mass="18568">MTQWIIWLAIETEAAKPEGGLFDFDATLPVMMVQLLVLMLILNAVFYKPLIKILDERKEYIQSNFNEAEKCLAQAAELTTQYETKITDARQNASKLTNTTRSEIQRFVSEKLEEAQKKADSELASATNKLELQKDEALKSLESEVQTLSTKILEKLLGIQIANT</sequence>
<dbReference type="EMBL" id="U30821">
    <property type="protein sequence ID" value="AAA81256.1"/>
    <property type="molecule type" value="Genomic_DNA"/>
</dbReference>
<dbReference type="PIR" id="T06913">
    <property type="entry name" value="T06913"/>
</dbReference>
<dbReference type="RefSeq" id="NP_043225.1">
    <property type="nucleotide sequence ID" value="NC_001675.1"/>
</dbReference>
<dbReference type="SMR" id="P48085"/>
<dbReference type="GeneID" id="801649"/>
<dbReference type="GO" id="GO:0033115">
    <property type="term" value="C:cyanelle thylakoid membrane"/>
    <property type="evidence" value="ECO:0007669"/>
    <property type="project" value="UniProtKB-SubCell"/>
</dbReference>
<dbReference type="GO" id="GO:0005886">
    <property type="term" value="C:plasma membrane"/>
    <property type="evidence" value="ECO:0007669"/>
    <property type="project" value="UniProtKB-UniRule"/>
</dbReference>
<dbReference type="GO" id="GO:0045259">
    <property type="term" value="C:proton-transporting ATP synthase complex"/>
    <property type="evidence" value="ECO:0007669"/>
    <property type="project" value="UniProtKB-KW"/>
</dbReference>
<dbReference type="GO" id="GO:0046933">
    <property type="term" value="F:proton-transporting ATP synthase activity, rotational mechanism"/>
    <property type="evidence" value="ECO:0007669"/>
    <property type="project" value="UniProtKB-UniRule"/>
</dbReference>
<dbReference type="GO" id="GO:0046961">
    <property type="term" value="F:proton-transporting ATPase activity, rotational mechanism"/>
    <property type="evidence" value="ECO:0007669"/>
    <property type="project" value="TreeGrafter"/>
</dbReference>
<dbReference type="CDD" id="cd06503">
    <property type="entry name" value="ATP-synt_Fo_b"/>
    <property type="match status" value="1"/>
</dbReference>
<dbReference type="HAMAP" id="MF_01398">
    <property type="entry name" value="ATP_synth_b_bprime"/>
    <property type="match status" value="1"/>
</dbReference>
<dbReference type="HAMAP" id="MF_01399">
    <property type="entry name" value="ATP_synth_bprime"/>
    <property type="match status" value="1"/>
</dbReference>
<dbReference type="InterPro" id="IPR034679">
    <property type="entry name" value="ATP_synth_b"/>
</dbReference>
<dbReference type="InterPro" id="IPR002146">
    <property type="entry name" value="ATP_synth_b/b'su_bac/chlpt"/>
</dbReference>
<dbReference type="InterPro" id="IPR050059">
    <property type="entry name" value="ATP_synthase_B_chain"/>
</dbReference>
<dbReference type="NCBIfam" id="NF005607">
    <property type="entry name" value="PRK07353.1"/>
    <property type="match status" value="1"/>
</dbReference>
<dbReference type="PANTHER" id="PTHR33445">
    <property type="entry name" value="ATP SYNTHASE SUBUNIT B', CHLOROPLASTIC"/>
    <property type="match status" value="1"/>
</dbReference>
<dbReference type="PANTHER" id="PTHR33445:SF2">
    <property type="entry name" value="ATP SYNTHASE SUBUNIT B', CHLOROPLASTIC"/>
    <property type="match status" value="1"/>
</dbReference>
<dbReference type="Pfam" id="PF00430">
    <property type="entry name" value="ATP-synt_B"/>
    <property type="match status" value="1"/>
</dbReference>
<name>ATPF2_CYAPA</name>
<reference key="1">
    <citation type="journal article" date="1995" name="Plant Mol. Biol. Rep.">
        <title>Nucleotide sequence of the cyanelle DNA from Cyanophora paradoxa.</title>
        <authorList>
            <person name="Stirewalt V.L."/>
            <person name="Michalowski C.B."/>
            <person name="Loeffelhardt W."/>
            <person name="Bohnert H.J."/>
            <person name="Bryant D.A."/>
        </authorList>
    </citation>
    <scope>NUCLEOTIDE SEQUENCE [LARGE SCALE GENOMIC DNA]</scope>
    <source>
        <strain>UTEX LB 555 / Pringsheim</strain>
    </source>
</reference>
<reference key="2">
    <citation type="book" date="1997" name="Eukaryotism and symbiosis">
        <title>The complete sequence of the cyanelle genome of Cyanophora paradoxa: the genetic complexity of a primitive plastid.</title>
        <editorList>
            <person name="Schenk H.E.A."/>
            <person name="Herrmann R."/>
            <person name="Jeon K.W."/>
            <person name="Mueller N.E."/>
            <person name="Schwemmler W."/>
        </editorList>
        <authorList>
            <person name="Loeffelhardt W."/>
            <person name="Stirewalt V.L."/>
            <person name="Michalowski C.B."/>
            <person name="Annarella M."/>
            <person name="Farley J.Y."/>
            <person name="Schluchter W.M."/>
            <person name="Chung S."/>
            <person name="Newmann-Spallart C."/>
            <person name="Steiner J.M."/>
            <person name="Jakowitsch J."/>
            <person name="Bohnert H.J."/>
            <person name="Bryant D.A."/>
        </authorList>
    </citation>
    <scope>NUCLEOTIDE SEQUENCE [LARGE SCALE GENOMIC DNA]</scope>
    <source>
        <strain>UTEX LB 555 / Pringsheim</strain>
    </source>
</reference>
<geneLocation type="cyanelle"/>
<evidence type="ECO:0000250" key="1"/>
<evidence type="ECO:0000255" key="2">
    <source>
        <dbReference type="HAMAP-Rule" id="MF_01399"/>
    </source>
</evidence>
<comment type="function">
    <text evidence="2">F(1)F(0) ATP synthase produces ATP from ADP in the presence of a proton or sodium gradient. F-type ATPases consist of two structural domains, F(1) containing the extramembraneous catalytic core and F(0) containing the membrane proton channel, linked together by a central stalk and a peripheral stalk. During catalysis, ATP synthesis in the catalytic domain of F(1) is coupled via a rotary mechanism of the central stalk subunits to proton translocation.</text>
</comment>
<comment type="function">
    <text evidence="2">Component of the F(0) channel, it forms part of the peripheral stalk, linking F(1) to F(0). The b'-subunit is a diverged and duplicated form of b found in plants and photosynthetic bacteria.</text>
</comment>
<comment type="subunit">
    <text evidence="2">F-type ATPases have 2 components, F(1) - the catalytic core - and F(0) - the membrane proton channel. F(1) has five subunits: alpha(3), beta(3), gamma(1), delta(1), epsilon(1). F(0) has four main subunits: a(1), b(1), b'(1) and c(10-14). The alpha and beta chains form an alternating ring which encloses part of the gamma chain. F(1) is attached to F(0) by a central stalk formed by the gamma and epsilon chains, while a peripheral stalk is formed by the delta, b and b' chains.</text>
</comment>
<comment type="subcellular location">
    <subcellularLocation>
        <location evidence="1">Plastid</location>
        <location evidence="1">Cyanelle thylakoid membrane</location>
        <topology evidence="2">Single-pass membrane protein</topology>
    </subcellularLocation>
</comment>
<comment type="similarity">
    <text evidence="2">Belongs to the ATPase B chain family.</text>
</comment>
<protein>
    <recommendedName>
        <fullName>ATP synthase B' chain, cyanelle</fullName>
    </recommendedName>
    <alternativeName>
        <fullName evidence="2">ATPase subunit II</fullName>
    </alternativeName>
</protein>
<gene>
    <name evidence="2" type="primary">atpF2</name>
    <name evidence="2" type="synonym">atpG</name>
</gene>